<protein>
    <recommendedName>
        <fullName evidence="1">Acetylglutamate kinase</fullName>
        <ecNumber evidence="1">2.7.2.8</ecNumber>
    </recommendedName>
    <alternativeName>
        <fullName evidence="1">N-acetyl-L-glutamate 5-phosphotransferase</fullName>
    </alternativeName>
    <alternativeName>
        <fullName evidence="1">NAG kinase</fullName>
        <shortName evidence="1">NAGK</shortName>
    </alternativeName>
</protein>
<evidence type="ECO:0000255" key="1">
    <source>
        <dbReference type="HAMAP-Rule" id="MF_00082"/>
    </source>
</evidence>
<feature type="chain" id="PRO_1000010549" description="Acetylglutamate kinase">
    <location>
        <begin position="1"/>
        <end position="283"/>
    </location>
</feature>
<feature type="binding site" evidence="1">
    <location>
        <begin position="64"/>
        <end position="65"/>
    </location>
    <ligand>
        <name>substrate</name>
    </ligand>
</feature>
<feature type="binding site" evidence="1">
    <location>
        <position position="86"/>
    </location>
    <ligand>
        <name>substrate</name>
    </ligand>
</feature>
<feature type="binding site" evidence="1">
    <location>
        <position position="181"/>
    </location>
    <ligand>
        <name>substrate</name>
    </ligand>
</feature>
<feature type="site" description="Transition state stabilizer" evidence="1">
    <location>
        <position position="29"/>
    </location>
</feature>
<feature type="site" description="Transition state stabilizer" evidence="1">
    <location>
        <position position="241"/>
    </location>
</feature>
<sequence length="283" mass="30312">MKHKIDVVKTLLDALPFIKKFSNEKIVVKYGGAAQTSAELKEQFAQDIVLLHLVGMKPIIVHGGGKSITQLLADLGVDTTFIDGQRVTTKEVMRIVEMVLSGEINKEIVSLLDNHGAKAIGISGKDGGFLKGMPKDFENFGYTGLIEDIDPEIVDNIIDDDAVPVIAPIAGSNILGHPGFNINADLAASRIAVALEARKILFLTDTPGVLDKEMELITNLSIEQTEALKEDGTIQGGMVPKVDACIEALRGGVKKAHIIDGRVEHSLLLEILTSSGVGTCIEL</sequence>
<proteinExistence type="inferred from homology"/>
<dbReference type="EC" id="2.7.2.8" evidence="1"/>
<dbReference type="EMBL" id="AP009179">
    <property type="protein sequence ID" value="BAF72578.1"/>
    <property type="molecule type" value="Genomic_DNA"/>
</dbReference>
<dbReference type="RefSeq" id="WP_012083388.1">
    <property type="nucleotide sequence ID" value="NC_009663.1"/>
</dbReference>
<dbReference type="SMR" id="A6QAR9"/>
<dbReference type="STRING" id="387093.SUN_1628"/>
<dbReference type="KEGG" id="sun:SUN_1628"/>
<dbReference type="eggNOG" id="COG0548">
    <property type="taxonomic scope" value="Bacteria"/>
</dbReference>
<dbReference type="HOGENOM" id="CLU_053680_0_0_7"/>
<dbReference type="OrthoDB" id="9803155at2"/>
<dbReference type="UniPathway" id="UPA00068">
    <property type="reaction ID" value="UER00107"/>
</dbReference>
<dbReference type="Proteomes" id="UP000006378">
    <property type="component" value="Chromosome"/>
</dbReference>
<dbReference type="GO" id="GO:0005737">
    <property type="term" value="C:cytoplasm"/>
    <property type="evidence" value="ECO:0007669"/>
    <property type="project" value="UniProtKB-SubCell"/>
</dbReference>
<dbReference type="GO" id="GO:0003991">
    <property type="term" value="F:acetylglutamate kinase activity"/>
    <property type="evidence" value="ECO:0007669"/>
    <property type="project" value="UniProtKB-UniRule"/>
</dbReference>
<dbReference type="GO" id="GO:0005524">
    <property type="term" value="F:ATP binding"/>
    <property type="evidence" value="ECO:0007669"/>
    <property type="project" value="UniProtKB-UniRule"/>
</dbReference>
<dbReference type="GO" id="GO:0042450">
    <property type="term" value="P:arginine biosynthetic process via ornithine"/>
    <property type="evidence" value="ECO:0007669"/>
    <property type="project" value="UniProtKB-UniRule"/>
</dbReference>
<dbReference type="GO" id="GO:0006526">
    <property type="term" value="P:L-arginine biosynthetic process"/>
    <property type="evidence" value="ECO:0007669"/>
    <property type="project" value="UniProtKB-UniPathway"/>
</dbReference>
<dbReference type="CDD" id="cd04250">
    <property type="entry name" value="AAK_NAGK-C"/>
    <property type="match status" value="1"/>
</dbReference>
<dbReference type="FunFam" id="3.40.1160.10:FF:000004">
    <property type="entry name" value="Acetylglutamate kinase"/>
    <property type="match status" value="1"/>
</dbReference>
<dbReference type="Gene3D" id="3.40.1160.10">
    <property type="entry name" value="Acetylglutamate kinase-like"/>
    <property type="match status" value="1"/>
</dbReference>
<dbReference type="HAMAP" id="MF_00082">
    <property type="entry name" value="ArgB"/>
    <property type="match status" value="1"/>
</dbReference>
<dbReference type="InterPro" id="IPR036393">
    <property type="entry name" value="AceGlu_kinase-like_sf"/>
</dbReference>
<dbReference type="InterPro" id="IPR004662">
    <property type="entry name" value="AcgluKinase_fam"/>
</dbReference>
<dbReference type="InterPro" id="IPR037528">
    <property type="entry name" value="ArgB"/>
</dbReference>
<dbReference type="InterPro" id="IPR001048">
    <property type="entry name" value="Asp/Glu/Uridylate_kinase"/>
</dbReference>
<dbReference type="InterPro" id="IPR001057">
    <property type="entry name" value="Glu/AcGlu_kinase"/>
</dbReference>
<dbReference type="InterPro" id="IPR041727">
    <property type="entry name" value="NAGK-C"/>
</dbReference>
<dbReference type="NCBIfam" id="TIGR00761">
    <property type="entry name" value="argB"/>
    <property type="match status" value="1"/>
</dbReference>
<dbReference type="PANTHER" id="PTHR23342">
    <property type="entry name" value="N-ACETYLGLUTAMATE SYNTHASE"/>
    <property type="match status" value="1"/>
</dbReference>
<dbReference type="PANTHER" id="PTHR23342:SF0">
    <property type="entry name" value="N-ACETYLGLUTAMATE SYNTHASE, MITOCHONDRIAL"/>
    <property type="match status" value="1"/>
</dbReference>
<dbReference type="Pfam" id="PF00696">
    <property type="entry name" value="AA_kinase"/>
    <property type="match status" value="1"/>
</dbReference>
<dbReference type="PIRSF" id="PIRSF000728">
    <property type="entry name" value="NAGK"/>
    <property type="match status" value="1"/>
</dbReference>
<dbReference type="PRINTS" id="PR00474">
    <property type="entry name" value="GLU5KINASE"/>
</dbReference>
<dbReference type="SUPFAM" id="SSF53633">
    <property type="entry name" value="Carbamate kinase-like"/>
    <property type="match status" value="1"/>
</dbReference>
<comment type="function">
    <text evidence="1">Catalyzes the ATP-dependent phosphorylation of N-acetyl-L-glutamate.</text>
</comment>
<comment type="catalytic activity">
    <reaction evidence="1">
        <text>N-acetyl-L-glutamate + ATP = N-acetyl-L-glutamyl 5-phosphate + ADP</text>
        <dbReference type="Rhea" id="RHEA:14629"/>
        <dbReference type="ChEBI" id="CHEBI:30616"/>
        <dbReference type="ChEBI" id="CHEBI:44337"/>
        <dbReference type="ChEBI" id="CHEBI:57936"/>
        <dbReference type="ChEBI" id="CHEBI:456216"/>
        <dbReference type="EC" id="2.7.2.8"/>
    </reaction>
</comment>
<comment type="pathway">
    <text evidence="1">Amino-acid biosynthesis; L-arginine biosynthesis; N(2)-acetyl-L-ornithine from L-glutamate: step 2/4.</text>
</comment>
<comment type="subcellular location">
    <subcellularLocation>
        <location evidence="1">Cytoplasm</location>
    </subcellularLocation>
</comment>
<comment type="similarity">
    <text evidence="1">Belongs to the acetylglutamate kinase family. ArgB subfamily.</text>
</comment>
<accession>A6QAR9</accession>
<organism>
    <name type="scientific">Sulfurovum sp. (strain NBC37-1)</name>
    <dbReference type="NCBI Taxonomy" id="387093"/>
    <lineage>
        <taxon>Bacteria</taxon>
        <taxon>Pseudomonadati</taxon>
        <taxon>Campylobacterota</taxon>
        <taxon>Epsilonproteobacteria</taxon>
        <taxon>Campylobacterales</taxon>
        <taxon>Sulfurovaceae</taxon>
        <taxon>Sulfurovum</taxon>
    </lineage>
</organism>
<gene>
    <name evidence="1" type="primary">argB</name>
    <name type="ordered locus">SUN_1628</name>
</gene>
<reference key="1">
    <citation type="journal article" date="2007" name="Proc. Natl. Acad. Sci. U.S.A.">
        <title>Deep-sea vent epsilon-proteobacterial genomes provide insights into emergence of pathogens.</title>
        <authorList>
            <person name="Nakagawa S."/>
            <person name="Takaki Y."/>
            <person name="Shimamura S."/>
            <person name="Reysenbach A.-L."/>
            <person name="Takai K."/>
            <person name="Horikoshi K."/>
        </authorList>
    </citation>
    <scope>NUCLEOTIDE SEQUENCE [LARGE SCALE GENOMIC DNA]</scope>
    <source>
        <strain>NBC37-1</strain>
    </source>
</reference>
<name>ARGB_SULNB</name>
<keyword id="KW-0028">Amino-acid biosynthesis</keyword>
<keyword id="KW-0055">Arginine biosynthesis</keyword>
<keyword id="KW-0067">ATP-binding</keyword>
<keyword id="KW-0963">Cytoplasm</keyword>
<keyword id="KW-0418">Kinase</keyword>
<keyword id="KW-0547">Nucleotide-binding</keyword>
<keyword id="KW-0808">Transferase</keyword>